<reference key="1">
    <citation type="submission" date="2009-09" db="EMBL/GenBank/DDBJ databases">
        <title>The complete genome of Nakamurella multipartita DSM 44233.</title>
        <authorList>
            <consortium name="US DOE Joint Genome Institute (JGI-PGF)"/>
            <person name="Lucas S."/>
            <person name="Copeland A."/>
            <person name="Lapidus A."/>
            <person name="Glavina del Rio T."/>
            <person name="Dalin E."/>
            <person name="Tice H."/>
            <person name="Bruce D."/>
            <person name="Goodwin L."/>
            <person name="Pitluck S."/>
            <person name="Kyrpides N."/>
            <person name="Mavromatis K."/>
            <person name="Ivanova N."/>
            <person name="Ovchinnikova G."/>
            <person name="Sims D."/>
            <person name="Meincke L."/>
            <person name="Brettin T."/>
            <person name="Detter J.C."/>
            <person name="Han C."/>
            <person name="Larimer F."/>
            <person name="Land M."/>
            <person name="Hauser L."/>
            <person name="Markowitz V."/>
            <person name="Cheng J.-F."/>
            <person name="Hugenholtz P."/>
            <person name="Woyke T."/>
            <person name="Wu D."/>
            <person name="Klenk H.-P."/>
            <person name="Eisen J.A."/>
        </authorList>
    </citation>
    <scope>NUCLEOTIDE SEQUENCE [LARGE SCALE GENOMIC DNA]</scope>
    <source>
        <strain>ATCC 700099 / DSM 44233 / CIP 104796 / JCM 9543 / NBRC 105858 / Y-104</strain>
    </source>
</reference>
<name>PSB_NAKMY</name>
<gene>
    <name evidence="1" type="primary">prcB</name>
    <name type="ordered locus">Namu_2969</name>
</gene>
<protein>
    <recommendedName>
        <fullName evidence="1">Proteasome subunit beta</fullName>
        <ecNumber evidence="1">3.4.25.1</ecNumber>
    </recommendedName>
    <alternativeName>
        <fullName evidence="1">20S proteasome beta subunit</fullName>
    </alternativeName>
    <alternativeName>
        <fullName evidence="1">Proteasome core protein PrcB</fullName>
    </alternativeName>
</protein>
<proteinExistence type="inferred from homology"/>
<keyword id="KW-0068">Autocatalytic cleavage</keyword>
<keyword id="KW-0963">Cytoplasm</keyword>
<keyword id="KW-0378">Hydrolase</keyword>
<keyword id="KW-0645">Protease</keyword>
<keyword id="KW-0647">Proteasome</keyword>
<keyword id="KW-1185">Reference proteome</keyword>
<keyword id="KW-0888">Threonine protease</keyword>
<keyword id="KW-0865">Zymogen</keyword>
<evidence type="ECO:0000255" key="1">
    <source>
        <dbReference type="HAMAP-Rule" id="MF_02113"/>
    </source>
</evidence>
<feature type="propeptide" id="PRO_0000397556" description="Removed in mature form; by autocatalysis" evidence="1">
    <location>
        <begin position="1"/>
        <end position="57"/>
    </location>
</feature>
<feature type="chain" id="PRO_0000397557" description="Proteasome subunit beta">
    <location>
        <begin position="58"/>
        <end position="288"/>
    </location>
</feature>
<feature type="active site" description="Nucleophile" evidence="1">
    <location>
        <position position="58"/>
    </location>
</feature>
<organism>
    <name type="scientific">Nakamurella multipartita (strain ATCC 700099 / DSM 44233 / CIP 104796 / JCM 9543 / NBRC 105858 / Y-104)</name>
    <name type="common">Microsphaera multipartita</name>
    <dbReference type="NCBI Taxonomy" id="479431"/>
    <lineage>
        <taxon>Bacteria</taxon>
        <taxon>Bacillati</taxon>
        <taxon>Actinomycetota</taxon>
        <taxon>Actinomycetes</taxon>
        <taxon>Nakamurellales</taxon>
        <taxon>Nakamurellaceae</taxon>
        <taxon>Nakamurella</taxon>
    </lineage>
</organism>
<comment type="function">
    <text evidence="1">Component of the proteasome core, a large protease complex with broad specificity involved in protein degradation.</text>
</comment>
<comment type="catalytic activity">
    <reaction evidence="1">
        <text>Cleavage of peptide bonds with very broad specificity.</text>
        <dbReference type="EC" id="3.4.25.1"/>
    </reaction>
</comment>
<comment type="activity regulation">
    <text evidence="1">The formation of the proteasomal ATPase ARC-20S proteasome complex, likely via the docking of the C-termini of ARC into the intersubunit pockets in the alpha-rings, may trigger opening of the gate for substrate entry. Interconversion between the open-gate and close-gate conformations leads to a dynamic regulation of the 20S proteasome proteolysis activity.</text>
</comment>
<comment type="pathway">
    <text evidence="1">Protein degradation; proteasomal Pup-dependent pathway.</text>
</comment>
<comment type="subunit">
    <text evidence="1">The 20S proteasome core is composed of 14 alpha and 14 beta subunits that assemble into four stacked heptameric rings, resulting in a barrel-shaped structure. The two inner rings, each composed of seven catalytic beta subunits, are sandwiched by two outer rings, each composed of seven alpha subunits. The catalytic chamber with the active sites is on the inside of the barrel. Has a gated structure, the ends of the cylinder being occluded by the N-termini of the alpha-subunits. Is capped by the proteasome-associated ATPase, ARC.</text>
</comment>
<comment type="subcellular location">
    <subcellularLocation>
        <location evidence="1">Cytoplasm</location>
    </subcellularLocation>
</comment>
<comment type="similarity">
    <text evidence="1">Belongs to the peptidase T1B family.</text>
</comment>
<accession>C8XAQ4</accession>
<dbReference type="EC" id="3.4.25.1" evidence="1"/>
<dbReference type="EMBL" id="CP001737">
    <property type="protein sequence ID" value="ACV79307.1"/>
    <property type="molecule type" value="Genomic_DNA"/>
</dbReference>
<dbReference type="SMR" id="C8XAQ4"/>
<dbReference type="FunCoup" id="C8XAQ4">
    <property type="interactions" value="270"/>
</dbReference>
<dbReference type="STRING" id="479431.Namu_2969"/>
<dbReference type="KEGG" id="nml:Namu_2969"/>
<dbReference type="eggNOG" id="COG0638">
    <property type="taxonomic scope" value="Bacteria"/>
</dbReference>
<dbReference type="HOGENOM" id="CLU_035750_2_0_11"/>
<dbReference type="InParanoid" id="C8XAQ4"/>
<dbReference type="UniPathway" id="UPA00997"/>
<dbReference type="Proteomes" id="UP000002218">
    <property type="component" value="Chromosome"/>
</dbReference>
<dbReference type="GO" id="GO:0005737">
    <property type="term" value="C:cytoplasm"/>
    <property type="evidence" value="ECO:0007669"/>
    <property type="project" value="UniProtKB-SubCell"/>
</dbReference>
<dbReference type="GO" id="GO:0019774">
    <property type="term" value="C:proteasome core complex, beta-subunit complex"/>
    <property type="evidence" value="ECO:0007669"/>
    <property type="project" value="UniProtKB-UniRule"/>
</dbReference>
<dbReference type="GO" id="GO:0004298">
    <property type="term" value="F:threonine-type endopeptidase activity"/>
    <property type="evidence" value="ECO:0007669"/>
    <property type="project" value="UniProtKB-UniRule"/>
</dbReference>
<dbReference type="GO" id="GO:0019941">
    <property type="term" value="P:modification-dependent protein catabolic process"/>
    <property type="evidence" value="ECO:0007669"/>
    <property type="project" value="UniProtKB-UniRule"/>
</dbReference>
<dbReference type="GO" id="GO:0010498">
    <property type="term" value="P:proteasomal protein catabolic process"/>
    <property type="evidence" value="ECO:0007669"/>
    <property type="project" value="UniProtKB-UniRule"/>
</dbReference>
<dbReference type="CDD" id="cd01906">
    <property type="entry name" value="proteasome_protease_HslV"/>
    <property type="match status" value="1"/>
</dbReference>
<dbReference type="Gene3D" id="3.60.20.10">
    <property type="entry name" value="Glutamine Phosphoribosylpyrophosphate, subunit 1, domain 1"/>
    <property type="match status" value="1"/>
</dbReference>
<dbReference type="HAMAP" id="MF_02113_B">
    <property type="entry name" value="Proteasome_B_B"/>
    <property type="match status" value="1"/>
</dbReference>
<dbReference type="InterPro" id="IPR029055">
    <property type="entry name" value="Ntn_hydrolases_N"/>
</dbReference>
<dbReference type="InterPro" id="IPR001353">
    <property type="entry name" value="Proteasome_sua/b"/>
</dbReference>
<dbReference type="InterPro" id="IPR023333">
    <property type="entry name" value="Proteasome_suB-type"/>
</dbReference>
<dbReference type="InterPro" id="IPR022483">
    <property type="entry name" value="PSB_actinobac"/>
</dbReference>
<dbReference type="NCBIfam" id="TIGR03690">
    <property type="entry name" value="20S_bact_beta"/>
    <property type="match status" value="1"/>
</dbReference>
<dbReference type="PANTHER" id="PTHR32194:SF0">
    <property type="entry name" value="ATP-DEPENDENT PROTEASE SUBUNIT HSLV"/>
    <property type="match status" value="1"/>
</dbReference>
<dbReference type="PANTHER" id="PTHR32194">
    <property type="entry name" value="METALLOPROTEASE TLDD"/>
    <property type="match status" value="1"/>
</dbReference>
<dbReference type="Pfam" id="PF00227">
    <property type="entry name" value="Proteasome"/>
    <property type="match status" value="1"/>
</dbReference>
<dbReference type="SUPFAM" id="SSF56235">
    <property type="entry name" value="N-terminal nucleophile aminohydrolases (Ntn hydrolases)"/>
    <property type="match status" value="1"/>
</dbReference>
<dbReference type="PROSITE" id="PS51476">
    <property type="entry name" value="PROTEASOME_BETA_2"/>
    <property type="match status" value="1"/>
</dbReference>
<sequence length="288" mass="29942">MTVDGQVGRWPVSAIPAAYMRPGSGSFTEFLAGAEPHLLPGRAGAQPAGAAPAVPHGTTIVALTCEQGVVVAGDRRATMGNIIAQRDIEKVFVADSHSAIGIAGTAGLAVEMVRLFRLELEHYEKIEGVRLSLDGKANRLATMIRGNLGMAMQGLAVVPLFAGVEEDPEVDPVKRGPGGGRIFSYDVAGGKYEEHDYYAVGSGSTFARSALKKRYNAAADLPGAVRTAVEALYDAADDDSATGGPDLTRRIFPVVVAITAQGAVRWSDDEVGVVAEAVVAGRMVNPGG</sequence>